<gene>
    <name evidence="1" type="primary">lexA</name>
    <name type="ordered locus">Bamb_1496</name>
</gene>
<sequence>MTKLTARQQQVFDLIRRAIERSGFPPTRAEIAAELGFSSPNAAEEHLRALARKGVIELAAGASRGIRLLGIEDAPHQFTLPHAGLMQLSLPLVGRVAAGSPILAQEHISQHYACDPALFTSKPDYLLKVRGLSMRDAGILDGDLLAVQKRTEAKDGQIIVARLGDDVTVKRLMRRPGGLELIAENPDYENIFVKAGSAEFALEGIAVGLIRSGEL</sequence>
<proteinExistence type="inferred from homology"/>
<dbReference type="EC" id="3.4.21.88" evidence="1"/>
<dbReference type="EMBL" id="CP000440">
    <property type="protein sequence ID" value="ABI87054.1"/>
    <property type="molecule type" value="Genomic_DNA"/>
</dbReference>
<dbReference type="RefSeq" id="WP_006759459.1">
    <property type="nucleotide sequence ID" value="NZ_CP009798.1"/>
</dbReference>
<dbReference type="SMR" id="Q0BFL9"/>
<dbReference type="MEROPS" id="S24.001"/>
<dbReference type="GeneID" id="93083103"/>
<dbReference type="KEGG" id="bam:Bamb_1496"/>
<dbReference type="PATRIC" id="fig|339670.21.peg.38"/>
<dbReference type="eggNOG" id="COG1974">
    <property type="taxonomic scope" value="Bacteria"/>
</dbReference>
<dbReference type="Proteomes" id="UP000000662">
    <property type="component" value="Chromosome 1"/>
</dbReference>
<dbReference type="GO" id="GO:0003677">
    <property type="term" value="F:DNA binding"/>
    <property type="evidence" value="ECO:0007669"/>
    <property type="project" value="UniProtKB-UniRule"/>
</dbReference>
<dbReference type="GO" id="GO:0004252">
    <property type="term" value="F:serine-type endopeptidase activity"/>
    <property type="evidence" value="ECO:0007669"/>
    <property type="project" value="UniProtKB-UniRule"/>
</dbReference>
<dbReference type="GO" id="GO:0006281">
    <property type="term" value="P:DNA repair"/>
    <property type="evidence" value="ECO:0007669"/>
    <property type="project" value="UniProtKB-UniRule"/>
</dbReference>
<dbReference type="GO" id="GO:0006260">
    <property type="term" value="P:DNA replication"/>
    <property type="evidence" value="ECO:0007669"/>
    <property type="project" value="UniProtKB-UniRule"/>
</dbReference>
<dbReference type="GO" id="GO:0045892">
    <property type="term" value="P:negative regulation of DNA-templated transcription"/>
    <property type="evidence" value="ECO:0007669"/>
    <property type="project" value="UniProtKB-UniRule"/>
</dbReference>
<dbReference type="GO" id="GO:0006508">
    <property type="term" value="P:proteolysis"/>
    <property type="evidence" value="ECO:0007669"/>
    <property type="project" value="InterPro"/>
</dbReference>
<dbReference type="GO" id="GO:0009432">
    <property type="term" value="P:SOS response"/>
    <property type="evidence" value="ECO:0007669"/>
    <property type="project" value="UniProtKB-UniRule"/>
</dbReference>
<dbReference type="CDD" id="cd06529">
    <property type="entry name" value="S24_LexA-like"/>
    <property type="match status" value="1"/>
</dbReference>
<dbReference type="FunFam" id="1.10.10.10:FF:000009">
    <property type="entry name" value="LexA repressor"/>
    <property type="match status" value="1"/>
</dbReference>
<dbReference type="FunFam" id="2.10.109.10:FF:000001">
    <property type="entry name" value="LexA repressor"/>
    <property type="match status" value="1"/>
</dbReference>
<dbReference type="Gene3D" id="2.10.109.10">
    <property type="entry name" value="Umud Fragment, subunit A"/>
    <property type="match status" value="1"/>
</dbReference>
<dbReference type="Gene3D" id="1.10.10.10">
    <property type="entry name" value="Winged helix-like DNA-binding domain superfamily/Winged helix DNA-binding domain"/>
    <property type="match status" value="1"/>
</dbReference>
<dbReference type="HAMAP" id="MF_00015">
    <property type="entry name" value="LexA"/>
    <property type="match status" value="1"/>
</dbReference>
<dbReference type="InterPro" id="IPR006200">
    <property type="entry name" value="LexA"/>
</dbReference>
<dbReference type="InterPro" id="IPR039418">
    <property type="entry name" value="LexA-like"/>
</dbReference>
<dbReference type="InterPro" id="IPR036286">
    <property type="entry name" value="LexA/Signal_pep-like_sf"/>
</dbReference>
<dbReference type="InterPro" id="IPR006199">
    <property type="entry name" value="LexA_DNA-bd_dom"/>
</dbReference>
<dbReference type="InterPro" id="IPR050077">
    <property type="entry name" value="LexA_repressor"/>
</dbReference>
<dbReference type="InterPro" id="IPR006197">
    <property type="entry name" value="Peptidase_S24_LexA"/>
</dbReference>
<dbReference type="InterPro" id="IPR015927">
    <property type="entry name" value="Peptidase_S24_S26A/B/C"/>
</dbReference>
<dbReference type="InterPro" id="IPR036388">
    <property type="entry name" value="WH-like_DNA-bd_sf"/>
</dbReference>
<dbReference type="InterPro" id="IPR036390">
    <property type="entry name" value="WH_DNA-bd_sf"/>
</dbReference>
<dbReference type="NCBIfam" id="TIGR00498">
    <property type="entry name" value="lexA"/>
    <property type="match status" value="1"/>
</dbReference>
<dbReference type="PANTHER" id="PTHR33516">
    <property type="entry name" value="LEXA REPRESSOR"/>
    <property type="match status" value="1"/>
</dbReference>
<dbReference type="PANTHER" id="PTHR33516:SF2">
    <property type="entry name" value="LEXA REPRESSOR-RELATED"/>
    <property type="match status" value="1"/>
</dbReference>
<dbReference type="Pfam" id="PF01726">
    <property type="entry name" value="LexA_DNA_bind"/>
    <property type="match status" value="1"/>
</dbReference>
<dbReference type="Pfam" id="PF00717">
    <property type="entry name" value="Peptidase_S24"/>
    <property type="match status" value="1"/>
</dbReference>
<dbReference type="PRINTS" id="PR00726">
    <property type="entry name" value="LEXASERPTASE"/>
</dbReference>
<dbReference type="SUPFAM" id="SSF51306">
    <property type="entry name" value="LexA/Signal peptidase"/>
    <property type="match status" value="1"/>
</dbReference>
<dbReference type="SUPFAM" id="SSF46785">
    <property type="entry name" value="Winged helix' DNA-binding domain"/>
    <property type="match status" value="1"/>
</dbReference>
<organism>
    <name type="scientific">Burkholderia ambifaria (strain ATCC BAA-244 / DSM 16087 / CCUG 44356 / LMG 19182 / AMMD)</name>
    <name type="common">Burkholderia cepacia (strain AMMD)</name>
    <dbReference type="NCBI Taxonomy" id="339670"/>
    <lineage>
        <taxon>Bacteria</taxon>
        <taxon>Pseudomonadati</taxon>
        <taxon>Pseudomonadota</taxon>
        <taxon>Betaproteobacteria</taxon>
        <taxon>Burkholderiales</taxon>
        <taxon>Burkholderiaceae</taxon>
        <taxon>Burkholderia</taxon>
        <taxon>Burkholderia cepacia complex</taxon>
    </lineage>
</organism>
<name>LEXA_BURCM</name>
<protein>
    <recommendedName>
        <fullName evidence="1">LexA repressor</fullName>
        <ecNumber evidence="1">3.4.21.88</ecNumber>
    </recommendedName>
</protein>
<feature type="chain" id="PRO_1000001267" description="LexA repressor">
    <location>
        <begin position="1"/>
        <end position="215"/>
    </location>
</feature>
<feature type="DNA-binding region" description="H-T-H motif" evidence="1">
    <location>
        <begin position="28"/>
        <end position="48"/>
    </location>
</feature>
<feature type="active site" description="For autocatalytic cleavage activity" evidence="1">
    <location>
        <position position="133"/>
    </location>
</feature>
<feature type="active site" description="For autocatalytic cleavage activity" evidence="1">
    <location>
        <position position="170"/>
    </location>
</feature>
<feature type="site" description="Cleavage; by autolysis" evidence="1">
    <location>
        <begin position="98"/>
        <end position="99"/>
    </location>
</feature>
<accession>Q0BFL9</accession>
<evidence type="ECO:0000255" key="1">
    <source>
        <dbReference type="HAMAP-Rule" id="MF_00015"/>
    </source>
</evidence>
<reference key="1">
    <citation type="submission" date="2006-08" db="EMBL/GenBank/DDBJ databases">
        <title>Complete sequence of chromosome 1 of Burkholderia cepacia AMMD.</title>
        <authorList>
            <person name="Copeland A."/>
            <person name="Lucas S."/>
            <person name="Lapidus A."/>
            <person name="Barry K."/>
            <person name="Detter J.C."/>
            <person name="Glavina del Rio T."/>
            <person name="Hammon N."/>
            <person name="Israni S."/>
            <person name="Pitluck S."/>
            <person name="Bruce D."/>
            <person name="Chain P."/>
            <person name="Malfatti S."/>
            <person name="Shin M."/>
            <person name="Vergez L."/>
            <person name="Schmutz J."/>
            <person name="Larimer F."/>
            <person name="Land M."/>
            <person name="Hauser L."/>
            <person name="Kyrpides N."/>
            <person name="Kim E."/>
            <person name="Parke J."/>
            <person name="Coenye T."/>
            <person name="Konstantinidis K."/>
            <person name="Ramette A."/>
            <person name="Tiedje J."/>
            <person name="Richardson P."/>
        </authorList>
    </citation>
    <scope>NUCLEOTIDE SEQUENCE [LARGE SCALE GENOMIC DNA]</scope>
    <source>
        <strain>ATCC BAA-244 / DSM 16087 / CCUG 44356 / LMG 19182 / AMMD</strain>
    </source>
</reference>
<keyword id="KW-0068">Autocatalytic cleavage</keyword>
<keyword id="KW-0227">DNA damage</keyword>
<keyword id="KW-0234">DNA repair</keyword>
<keyword id="KW-0235">DNA replication</keyword>
<keyword id="KW-0238">DNA-binding</keyword>
<keyword id="KW-0378">Hydrolase</keyword>
<keyword id="KW-0678">Repressor</keyword>
<keyword id="KW-0742">SOS response</keyword>
<keyword id="KW-0804">Transcription</keyword>
<keyword id="KW-0805">Transcription regulation</keyword>
<comment type="function">
    <text evidence="1">Represses a number of genes involved in the response to DNA damage (SOS response), including recA and lexA. In the presence of single-stranded DNA, RecA interacts with LexA causing an autocatalytic cleavage which disrupts the DNA-binding part of LexA, leading to derepression of the SOS regulon and eventually DNA repair.</text>
</comment>
<comment type="catalytic activity">
    <reaction evidence="1">
        <text>Hydrolysis of Ala-|-Gly bond in repressor LexA.</text>
        <dbReference type="EC" id="3.4.21.88"/>
    </reaction>
</comment>
<comment type="subunit">
    <text evidence="1">Homodimer.</text>
</comment>
<comment type="similarity">
    <text evidence="1">Belongs to the peptidase S24 family.</text>
</comment>